<feature type="chain" id="PRO_0000144090" description="Nucleotide-binding oligomerization domain-containing protein 2">
    <location>
        <begin position="1"/>
        <end position="1040"/>
    </location>
</feature>
<feature type="domain" description="CARD 1" evidence="4">
    <location>
        <begin position="26"/>
        <end position="122"/>
    </location>
</feature>
<feature type="domain" description="CARD 2" evidence="4">
    <location>
        <begin position="126"/>
        <end position="218"/>
    </location>
</feature>
<feature type="domain" description="NACHT" evidence="5">
    <location>
        <begin position="293"/>
        <end position="618"/>
    </location>
</feature>
<feature type="repeat" description="LRR 1">
    <location>
        <begin position="791"/>
        <end position="812"/>
    </location>
</feature>
<feature type="repeat" description="LRR 2">
    <location>
        <begin position="816"/>
        <end position="839"/>
    </location>
</feature>
<feature type="repeat" description="LRR 3">
    <location>
        <begin position="844"/>
        <end position="865"/>
    </location>
</feature>
<feature type="repeat" description="LRR 4">
    <location>
        <begin position="872"/>
        <end position="884"/>
    </location>
</feature>
<feature type="repeat" description="LRR 5">
    <location>
        <begin position="900"/>
        <end position="920"/>
    </location>
</feature>
<feature type="repeat" description="LRR 6">
    <location>
        <begin position="928"/>
        <end position="949"/>
    </location>
</feature>
<feature type="repeat" description="LRR 7">
    <location>
        <begin position="956"/>
        <end position="976"/>
    </location>
</feature>
<feature type="repeat" description="LRR 8">
    <location>
        <begin position="984"/>
        <end position="1005"/>
    </location>
</feature>
<feature type="repeat" description="LRR 9">
    <location>
        <begin position="1012"/>
        <end position="1032"/>
    </location>
</feature>
<feature type="region of interest" description="Required for CARD9 binding" evidence="3">
    <location>
        <begin position="241"/>
        <end position="274"/>
    </location>
</feature>
<feature type="short sequence motif" description="ATG16L1-binding motif" evidence="3">
    <location>
        <begin position="63"/>
        <end position="77"/>
    </location>
</feature>
<feature type="binding site" evidence="1">
    <location>
        <position position="239"/>
    </location>
    <ligand>
        <name>ADP</name>
        <dbReference type="ChEBI" id="CHEBI:456216"/>
    </ligand>
</feature>
<feature type="binding site" evidence="1">
    <location>
        <position position="252"/>
    </location>
    <ligand>
        <name>ADP</name>
        <dbReference type="ChEBI" id="CHEBI:456216"/>
    </ligand>
</feature>
<feature type="binding site" evidence="1">
    <location>
        <position position="253"/>
    </location>
    <ligand>
        <name>ADP</name>
        <dbReference type="ChEBI" id="CHEBI:456216"/>
    </ligand>
</feature>
<feature type="binding site" evidence="5">
    <location>
        <begin position="299"/>
        <end position="306"/>
    </location>
    <ligand>
        <name>ATP</name>
        <dbReference type="ChEBI" id="CHEBI:30616"/>
    </ligand>
</feature>
<feature type="binding site" evidence="1">
    <location>
        <position position="302"/>
    </location>
    <ligand>
        <name>ADP</name>
        <dbReference type="ChEBI" id="CHEBI:456216"/>
    </ligand>
</feature>
<feature type="binding site" evidence="1">
    <location>
        <position position="303"/>
    </location>
    <ligand>
        <name>ADP</name>
        <dbReference type="ChEBI" id="CHEBI:456216"/>
    </ligand>
</feature>
<feature type="binding site" evidence="1">
    <location>
        <position position="304"/>
    </location>
    <ligand>
        <name>ADP</name>
        <dbReference type="ChEBI" id="CHEBI:456216"/>
    </ligand>
</feature>
<feature type="binding site" evidence="1">
    <location>
        <position position="305"/>
    </location>
    <ligand>
        <name>ADP</name>
        <dbReference type="ChEBI" id="CHEBI:456216"/>
    </ligand>
</feature>
<feature type="binding site" evidence="1">
    <location>
        <position position="306"/>
    </location>
    <ligand>
        <name>ADP</name>
        <dbReference type="ChEBI" id="CHEBI:456216"/>
    </ligand>
</feature>
<feature type="binding site" evidence="1">
    <location>
        <position position="307"/>
    </location>
    <ligand>
        <name>ADP</name>
        <dbReference type="ChEBI" id="CHEBI:456216"/>
    </ligand>
</feature>
<feature type="binding site" evidence="1">
    <location>
        <position position="603"/>
    </location>
    <ligand>
        <name>ADP</name>
        <dbReference type="ChEBI" id="CHEBI:456216"/>
    </ligand>
</feature>
<feature type="lipid moiety-binding region" description="S-palmitoyl cysteine" evidence="3">
    <location>
        <position position="395"/>
    </location>
</feature>
<feature type="lipid moiety-binding region" description="S-palmitoyl cysteine" evidence="3">
    <location>
        <position position="1033"/>
    </location>
</feature>
<organism>
    <name type="scientific">Hylobates lar</name>
    <name type="common">Lar gibbon</name>
    <name type="synonym">White-handed gibbon</name>
    <dbReference type="NCBI Taxonomy" id="9580"/>
    <lineage>
        <taxon>Eukaryota</taxon>
        <taxon>Metazoa</taxon>
        <taxon>Chordata</taxon>
        <taxon>Craniata</taxon>
        <taxon>Vertebrata</taxon>
        <taxon>Euteleostomi</taxon>
        <taxon>Mammalia</taxon>
        <taxon>Eutheria</taxon>
        <taxon>Euarchontoglires</taxon>
        <taxon>Primates</taxon>
        <taxon>Haplorrhini</taxon>
        <taxon>Catarrhini</taxon>
        <taxon>Hylobatidae</taxon>
        <taxon>Hylobates</taxon>
    </lineage>
</organism>
<protein>
    <recommendedName>
        <fullName>Nucleotide-binding oligomerization domain-containing protein 2</fullName>
    </recommendedName>
    <alternativeName>
        <fullName>Caspase recruitment domain-containing protein 15</fullName>
    </alternativeName>
</protein>
<reference key="1">
    <citation type="submission" date="2004-04" db="EMBL/GenBank/DDBJ databases">
        <title>Mutation, selection and evolution of the Crohn's disease susceptibility gene, CARD15.</title>
        <authorList>
            <person name="King K."/>
            <person name="Sheikh M."/>
            <person name="Cuthbert A.P."/>
            <person name="Fisher S.A."/>
            <person name="Mirza M.M."/>
            <person name="Sanderson J."/>
            <person name="Forbes A."/>
            <person name="Mansfield J."/>
            <person name="Roberts R.G."/>
            <person name="Mathew C.G."/>
        </authorList>
    </citation>
    <scope>NUCLEOTIDE SEQUENCE [GENOMIC DNA]</scope>
</reference>
<comment type="function">
    <text evidence="2 3">Pattern recognition receptor (PRR) that detects bacterial peptidoglycan fragments and other danger signals and plays an important role in gastrointestinal immunity. Specifically activated by muramyl dipeptide (MDP), a fragment of bacterial peptidoglycan found in every bacterial peptidoglycan type. NOD2 specifically recognizes and binds 6-O-phospho-MDP, the phosphorylated form of MDP, which is generated by NAGK. 6-O-phospho-MDP-binding triggers oligomerization that facilitates the binding and subsequent activation of the proximal adapter receptor-interacting RIPK2. Following recruitment, RIPK2 undergoes 'Met-1'- (linear) and 'Lys-63'-linked polyubiquitination by E3 ubiquitin-protein ligases XIAP, BIRC2, BIRC3 and the LUBAC complex, becoming a scaffolding protein for downstream effectors, triggering activation of the NF-kappa-B and MAP kinases signaling. This in turn leads to the transcriptional activation of hundreds of genes involved in immune response (By similarity). Its ability to detect bacterial MDP plays a central role in maintaining the equilibrium between intestinal microbiota and host immune responses to control inflammation. An imbalance in this relationship results in dysbiosis, whereby pathogenic bacteria prevail on commensals, causing damage in the intestinal epithelial barrier as well as allowing bacterial invasion and inflammation. Acts as a regulator of appetite by sensing MDP in a subset of brain neurons: microbiota-derived MDP reach the brain, where they bind and activate NOD2 in inhibitory hypothalamic neurons, decreasing neuronal activity, thereby regulating satiety and body temperature. NOD2-dependent MDP-sensing of bacterial cell walls in the intestinal epithelial compartment contributes to sustained postnatal growth upon undernutrition (By similarity). Also plays a role in antiviral response by acting as a sensor of single-stranded RNA (ssRNA) from viruses: upon ssRNA-binding, interacts with MAVS, leading to activation of interferon regulatory factor-3/IRF3 and expression of type I interferon. Also acts as a regulator of autophagy in dendritic cells via its interaction with ATG16L1, possibly by recruiting ATG16L1 at the site of bacterial entry (By similarity). NOD2 activation in the small intestine crypt also contributes to intestinal stem cells survival and function: acts by promoting mitophagy via its association with ATG16L1. In addition to its main role in innate immunity, also regulates the adaptive immune system by acting as regulator of helper T-cell and regulatory T-cells (Tregs) (By similarity). Besides recognizing pathogens, also involved in the endoplasmic reticulum stress response: acts by sensing and binding to the cytosolic metabolite sphingosine-1-phosphate generated in response to endoplasmic reticulum stress, initiating an inflammation process that leads to activation of the NF-kappa-B and MAP kinases signaling. May also be involved in NLRP1 activation following activation by MDP, leading to CASP1 activation and IL1B release in macrophages (By similarity).</text>
</comment>
<comment type="activity regulation">
    <text evidence="1">ADP-binding promotes an inactive closed conformation.</text>
</comment>
<comment type="subunit">
    <text evidence="3">Homooligomer: homooligomerizes following muramyl dipeptide (MDP)-binding, promoting RIPK2 recruitment. Interacts (via CARD domain) with RIPK2 (via CARD domain). Following RIPK2 recruitment, RIPK2 homooligomerizes via its CARD domain and forms long filaments named RIPosomes. Interacts (via CARD domain) with ubiquitin; inhibiting interaction with RIPK2. Component of a signaling complex consisting of ARHGEF2, NOD2 and RIPK2. Interacts with ANKRD17 (via N-terminus). Interacts with HSPA1A; the interaction enhances NOD2 stability. Interacts (via both CARD domains) with HSP90; the interaction enhances NOD2 stability. Interacts (via CARD domain) with SOCS3; the interaction promotes NOD2 degradation. Interacts (via CARD domain) with ERBIN; the interaction inhibits activation of NOD2. Interacts with MAPKBP1; the interaction is enhanced in the presence of muramyl dipeptide (MDP) and inhibits NOD2 homooligomerization and activation. Interacts with INAVA; the interaction takes place upon Pattern recognition receptor (PRR) stimulation. Interacts (via NACHT domain) with CARD9. Interacts (via CARD domain) with CASP1; this interaction leads to IL1B processing. Also interacts with CASP4. Interacts with NLRP1; this interaction is enhanced in the presence of muramyl dipeptide (MDP) and leads to increased IL1B release. Interacts with NLRP12; this interaction promotes degradation of NOD2 through the ubiquitin-proteasome pathway. Interacts with ANKHD1, C10orf67, CHMP5, DOCK7, ENTR1, KRT15, LDOC1, PPP1R12C, PPP2R3B, TRIM41 and VIM. Interacts with MAVS; interaction takes place following single-stranded RNA (ssRNA)-binding. Interacts with ATG16L1. Interacts with IRGM; promoting IRGM 'Lys-63'-linked polyubiquitination, which is required for interactions with the core autophagy factors.</text>
</comment>
<comment type="subcellular location">
    <subcellularLocation>
        <location evidence="3">Cell membrane</location>
        <topology evidence="3">Lipid-anchor</topology>
    </subcellularLocation>
    <subcellularLocation>
        <location evidence="3">Basolateral cell membrane</location>
    </subcellularLocation>
    <subcellularLocation>
        <location evidence="3">Cytoplasm</location>
    </subcellularLocation>
    <subcellularLocation>
        <location evidence="3">Mitochondrion</location>
    </subcellularLocation>
    <text evidence="3">Palmitoylation promotes localization to the cell membrane, where it detects bacterial invasion at the point of entry.</text>
</comment>
<comment type="domain">
    <text evidence="3">The ATG16L1-binding motif mediates interaction with ATG16L1.</text>
</comment>
<comment type="domain">
    <text evidence="3">Intramolecular interactions between the N-terminal moiety and the leucine-rich repeats (LRR) may be important for autoinhibition in the absence of activating signal.</text>
</comment>
<comment type="domain">
    <text evidence="3">The LRR repeats recognize and bind muramyl dipeptide (MDP).</text>
</comment>
<comment type="domain">
    <text evidence="3">The NACHT domain recognizes and binds sphingosine-1-phosphate in response to endoplasmic reticulum stress.</text>
</comment>
<comment type="PTM">
    <text evidence="3">Palmitoylated by ZDHHC5; palmitoylation is required for proper recruitment to the bacterial entry site and hence for proper signaling upon cognate peptidoglycan detection. Palmitoylation promotes localization to the cell membrane. Palmitoylation protects from SQSTM1/p62-dependent autophagic degradation.</text>
</comment>
<comment type="PTM">
    <text evidence="3">Polyubiquitinated by TRIM27, leading to proteasome-mediated degradation. Polyubiquitinated and degraded following muramyl dipeptide (MDP) stimulation, conferring MDP tolerance and preventing septic shock.</text>
</comment>
<comment type="PTM">
    <text evidence="3">Degraded via selective autophagy following interaction with IRGM. IRGM promotes NOD2-RIPK2 RIPosome recruitment to autophagosome membranes, promoting their SQSTM1/p62-dependent autophagic degradation.</text>
</comment>
<comment type="PTM">
    <text evidence="3">O-glycosylated by OGT, O-GlcNAcylation increases protein stability.</text>
</comment>
<comment type="similarity">
    <text evidence="6">Belongs to the NOD1-NOD2 family.</text>
</comment>
<gene>
    <name type="primary">NOD2</name>
    <name type="synonym">CARD15</name>
</gene>
<sequence>MGEEGGSVSHDEEERASVLLGQYLGCEMCSQEAFQAQRSQLVELLVSGSLEGFESVLDWLLSWEVLSWEDYEGFHLLGQPLSHLARRLLDTVWNKGTWACQKLIAAAQEAQADSQSPKLHGCWDPHSLHPARDLQSHRPAIVRRLHSHVEGVLDLAWERGFVSQYECDEIRLPIFTPSQRARRLLDLATVKANGLAAFLLQHVQELPVPLALPLEAATCRKYMAKLRTTVSAQSRFLSTYDGAETLCLEDIYTENVLEVWADVGTAGPPPKSPATLGLEELFSTPGHLNDDADTVLVVGEAGSGKSTLLQRLHLLWAAGRDFQEFLFVFPFSCRQLQCMAKPLSVRTLLFEHCCWPDVGQEDIFQLLLDHPDRVLLTFDGFDEFKFRFTDRERHCSPTDPTSVQTLLFNLLQGNLLKNARKVVTSRPAAVSAFLRKYIRTEFNLKGFSEQGIELYLRKRHREPGVADRLIRLLQATSALHGLCHLPVFSWMVSKCHQELLLQEGGSPKTTTDMYLLILQHFLLHAIPPDSASQGLGPSLLRGRLPTLLHLGRLALWGLGMCCYVFSAQQLQAAQVSPDDISLGFLVRAKGVVPGSTAPLEFLHITFQCFFAAFYLALSADVPPALLRHLFNCGRPGNSPVARLLPTLCIQGSEGKDSSVAALLQKAEPHNLQITAAFLAGLLSREHWGLLAECQTSEKALLRRQACARWCLARSLRKHFHSIPPAAPGEAKSMHAMPGFIWLIRSLYEMQEERLARKAARGLNVGHLKLTFCSVGPAECAALAFVLQHLRRPVALQLDYNSVGDIGVEQLLPCLGVCKALYLRDNNISDRGICKLIECALHCEQLQKLVLFNNKLTDGCAHSMAKLLACRQNFLALRLGNNHITPAGAQVLAEGLRGNTSLQFLGFWGNRVGDEGAQALAEALGDHQSLRWLSLVGNNIGSVGAQALALMLAKNVMLEELCLEENHIQDEGVCSLAEGLKKNSSLKILKLSNNCITYLGAKALLQALERNDTILEVWLRGNIFSLEEVDKLGCRDIRLLL</sequence>
<keyword id="KW-1064">Adaptive immunity</keyword>
<keyword id="KW-0067">ATP-binding</keyword>
<keyword id="KW-0072">Autophagy</keyword>
<keyword id="KW-1003">Cell membrane</keyword>
<keyword id="KW-0963">Cytoplasm</keyword>
<keyword id="KW-0325">Glycoprotein</keyword>
<keyword id="KW-0391">Immunity</keyword>
<keyword id="KW-0399">Innate immunity</keyword>
<keyword id="KW-0433">Leucine-rich repeat</keyword>
<keyword id="KW-0449">Lipoprotein</keyword>
<keyword id="KW-0472">Membrane</keyword>
<keyword id="KW-0496">Mitochondrion</keyword>
<keyword id="KW-0547">Nucleotide-binding</keyword>
<keyword id="KW-0564">Palmitate</keyword>
<keyword id="KW-0677">Repeat</keyword>
<keyword id="KW-0832">Ubl conjugation</keyword>
<accession>Q53B88</accession>
<evidence type="ECO:0000250" key="1">
    <source>
        <dbReference type="UniProtKB" id="G1T469"/>
    </source>
</evidence>
<evidence type="ECO:0000250" key="2">
    <source>
        <dbReference type="UniProtKB" id="Q8K3Z0"/>
    </source>
</evidence>
<evidence type="ECO:0000250" key="3">
    <source>
        <dbReference type="UniProtKB" id="Q9HC29"/>
    </source>
</evidence>
<evidence type="ECO:0000255" key="4">
    <source>
        <dbReference type="PROSITE-ProRule" id="PRU00046"/>
    </source>
</evidence>
<evidence type="ECO:0000255" key="5">
    <source>
        <dbReference type="PROSITE-ProRule" id="PRU00136"/>
    </source>
</evidence>
<evidence type="ECO:0000305" key="6"/>
<name>NOD2_HYLLA</name>
<dbReference type="EMBL" id="AY594161">
    <property type="protein sequence ID" value="AAS89990.1"/>
    <property type="molecule type" value="Genomic_DNA"/>
</dbReference>
<dbReference type="EMBL" id="AY594150">
    <property type="protein sequence ID" value="AAS89990.1"/>
    <property type="status" value="JOINED"/>
    <property type="molecule type" value="Genomic_DNA"/>
</dbReference>
<dbReference type="EMBL" id="AY594151">
    <property type="protein sequence ID" value="AAS89990.1"/>
    <property type="status" value="JOINED"/>
    <property type="molecule type" value="Genomic_DNA"/>
</dbReference>
<dbReference type="EMBL" id="AY594152">
    <property type="protein sequence ID" value="AAS89990.1"/>
    <property type="status" value="JOINED"/>
    <property type="molecule type" value="Genomic_DNA"/>
</dbReference>
<dbReference type="EMBL" id="AY594153">
    <property type="protein sequence ID" value="AAS89990.1"/>
    <property type="status" value="JOINED"/>
    <property type="molecule type" value="Genomic_DNA"/>
</dbReference>
<dbReference type="EMBL" id="AY594154">
    <property type="protein sequence ID" value="AAS89990.1"/>
    <property type="status" value="JOINED"/>
    <property type="molecule type" value="Genomic_DNA"/>
</dbReference>
<dbReference type="EMBL" id="AY594155">
    <property type="protein sequence ID" value="AAS89990.1"/>
    <property type="status" value="JOINED"/>
    <property type="molecule type" value="Genomic_DNA"/>
</dbReference>
<dbReference type="EMBL" id="AY594156">
    <property type="protein sequence ID" value="AAS89990.1"/>
    <property type="status" value="JOINED"/>
    <property type="molecule type" value="Genomic_DNA"/>
</dbReference>
<dbReference type="EMBL" id="AY594157">
    <property type="protein sequence ID" value="AAS89990.1"/>
    <property type="status" value="JOINED"/>
    <property type="molecule type" value="Genomic_DNA"/>
</dbReference>
<dbReference type="EMBL" id="AY594158">
    <property type="protein sequence ID" value="AAS89990.1"/>
    <property type="status" value="JOINED"/>
    <property type="molecule type" value="Genomic_DNA"/>
</dbReference>
<dbReference type="EMBL" id="AY594159">
    <property type="protein sequence ID" value="AAS89990.1"/>
    <property type="status" value="JOINED"/>
    <property type="molecule type" value="Genomic_DNA"/>
</dbReference>
<dbReference type="EMBL" id="AY594160">
    <property type="protein sequence ID" value="AAS89990.1"/>
    <property type="status" value="JOINED"/>
    <property type="molecule type" value="Genomic_DNA"/>
</dbReference>
<dbReference type="SMR" id="Q53B88"/>
<dbReference type="GO" id="GO:0016323">
    <property type="term" value="C:basolateral plasma membrane"/>
    <property type="evidence" value="ECO:0007669"/>
    <property type="project" value="UniProtKB-SubCell"/>
</dbReference>
<dbReference type="GO" id="GO:0009986">
    <property type="term" value="C:cell surface"/>
    <property type="evidence" value="ECO:0000250"/>
    <property type="project" value="UniProtKB"/>
</dbReference>
<dbReference type="GO" id="GO:0005737">
    <property type="term" value="C:cytoplasm"/>
    <property type="evidence" value="ECO:0000250"/>
    <property type="project" value="UniProtKB"/>
</dbReference>
<dbReference type="GO" id="GO:0005856">
    <property type="term" value="C:cytoskeleton"/>
    <property type="evidence" value="ECO:0000250"/>
    <property type="project" value="UniProtKB"/>
</dbReference>
<dbReference type="GO" id="GO:0005829">
    <property type="term" value="C:cytosol"/>
    <property type="evidence" value="ECO:0000250"/>
    <property type="project" value="UniProtKB"/>
</dbReference>
<dbReference type="GO" id="GO:0019897">
    <property type="term" value="C:extrinsic component of plasma membrane"/>
    <property type="evidence" value="ECO:0000250"/>
    <property type="project" value="UniProtKB"/>
</dbReference>
<dbReference type="GO" id="GO:0005739">
    <property type="term" value="C:mitochondrion"/>
    <property type="evidence" value="ECO:0007669"/>
    <property type="project" value="UniProtKB-SubCell"/>
</dbReference>
<dbReference type="GO" id="GO:0005886">
    <property type="term" value="C:plasma membrane"/>
    <property type="evidence" value="ECO:0000250"/>
    <property type="project" value="UniProtKB"/>
</dbReference>
<dbReference type="GO" id="GO:0032991">
    <property type="term" value="C:protein-containing complex"/>
    <property type="evidence" value="ECO:0000250"/>
    <property type="project" value="UniProtKB"/>
</dbReference>
<dbReference type="GO" id="GO:0031982">
    <property type="term" value="C:vesicle"/>
    <property type="evidence" value="ECO:0000250"/>
    <property type="project" value="UniProtKB"/>
</dbReference>
<dbReference type="GO" id="GO:0043531">
    <property type="term" value="F:ADP binding"/>
    <property type="evidence" value="ECO:0000250"/>
    <property type="project" value="UniProtKB"/>
</dbReference>
<dbReference type="GO" id="GO:0005524">
    <property type="term" value="F:ATP binding"/>
    <property type="evidence" value="ECO:0007669"/>
    <property type="project" value="UniProtKB-KW"/>
</dbReference>
<dbReference type="GO" id="GO:0050700">
    <property type="term" value="F:CARD domain binding"/>
    <property type="evidence" value="ECO:0000250"/>
    <property type="project" value="UniProtKB"/>
</dbReference>
<dbReference type="GO" id="GO:0019899">
    <property type="term" value="F:enzyme binding"/>
    <property type="evidence" value="ECO:0000250"/>
    <property type="project" value="UniProtKB"/>
</dbReference>
<dbReference type="GO" id="GO:0032500">
    <property type="term" value="F:muramyl dipeptide binding"/>
    <property type="evidence" value="ECO:0000250"/>
    <property type="project" value="UniProtKB"/>
</dbReference>
<dbReference type="GO" id="GO:0038187">
    <property type="term" value="F:pattern recognition receptor activity"/>
    <property type="evidence" value="ECO:0000250"/>
    <property type="project" value="UniProtKB"/>
</dbReference>
<dbReference type="GO" id="GO:0042834">
    <property type="term" value="F:peptidoglycan binding"/>
    <property type="evidence" value="ECO:0000250"/>
    <property type="project" value="UniProtKB"/>
</dbReference>
<dbReference type="GO" id="GO:0019901">
    <property type="term" value="F:protein kinase binding"/>
    <property type="evidence" value="ECO:0000250"/>
    <property type="project" value="UniProtKB"/>
</dbReference>
<dbReference type="GO" id="GO:0043130">
    <property type="term" value="F:ubiquitin binding"/>
    <property type="evidence" value="ECO:0000250"/>
    <property type="project" value="UniProtKB"/>
</dbReference>
<dbReference type="GO" id="GO:0002250">
    <property type="term" value="P:adaptive immune response"/>
    <property type="evidence" value="ECO:0007669"/>
    <property type="project" value="UniProtKB-KW"/>
</dbReference>
<dbReference type="GO" id="GO:0006914">
    <property type="term" value="P:autophagy"/>
    <property type="evidence" value="ECO:0007669"/>
    <property type="project" value="UniProtKB-KW"/>
</dbReference>
<dbReference type="GO" id="GO:0071222">
    <property type="term" value="P:cellular response to lipopolysaccharide"/>
    <property type="evidence" value="ECO:0000250"/>
    <property type="project" value="UniProtKB"/>
</dbReference>
<dbReference type="GO" id="GO:0071225">
    <property type="term" value="P:cellular response to muramyl dipeptide"/>
    <property type="evidence" value="ECO:0000250"/>
    <property type="project" value="UniProtKB"/>
</dbReference>
<dbReference type="GO" id="GO:0042742">
    <property type="term" value="P:defense response to bacterium"/>
    <property type="evidence" value="ECO:0000250"/>
    <property type="project" value="UniProtKB"/>
</dbReference>
<dbReference type="GO" id="GO:0016045">
    <property type="term" value="P:detection of bacterium"/>
    <property type="evidence" value="ECO:0000250"/>
    <property type="project" value="UniProtKB"/>
</dbReference>
<dbReference type="GO" id="GO:0032498">
    <property type="term" value="P:detection of muramyl dipeptide"/>
    <property type="evidence" value="ECO:0000250"/>
    <property type="project" value="UniProtKB"/>
</dbReference>
<dbReference type="GO" id="GO:0048874">
    <property type="term" value="P:host-mediated regulation of intestinal microbiota composition"/>
    <property type="evidence" value="ECO:0000250"/>
    <property type="project" value="UniProtKB"/>
</dbReference>
<dbReference type="GO" id="GO:0045087">
    <property type="term" value="P:innate immune response"/>
    <property type="evidence" value="ECO:0000250"/>
    <property type="project" value="UniProtKB"/>
</dbReference>
<dbReference type="GO" id="GO:0036335">
    <property type="term" value="P:intestinal stem cell homeostasis"/>
    <property type="evidence" value="ECO:0000250"/>
    <property type="project" value="UniProtKB"/>
</dbReference>
<dbReference type="GO" id="GO:0035556">
    <property type="term" value="P:intracellular signal transduction"/>
    <property type="evidence" value="ECO:0000250"/>
    <property type="project" value="UniProtKB"/>
</dbReference>
<dbReference type="GO" id="GO:0070431">
    <property type="term" value="P:nucleotide-binding oligomerization domain containing 2 signaling pathway"/>
    <property type="evidence" value="ECO:0000250"/>
    <property type="project" value="UniProtKB"/>
</dbReference>
<dbReference type="GO" id="GO:0043123">
    <property type="term" value="P:positive regulation of canonical NF-kappaB signal transduction"/>
    <property type="evidence" value="ECO:0000250"/>
    <property type="project" value="UniProtKB"/>
</dbReference>
<dbReference type="GO" id="GO:0002720">
    <property type="term" value="P:positive regulation of cytokine production involved in immune response"/>
    <property type="evidence" value="ECO:0000250"/>
    <property type="project" value="UniProtKB"/>
</dbReference>
<dbReference type="GO" id="GO:0032731">
    <property type="term" value="P:positive regulation of interleukin-1 beta production"/>
    <property type="evidence" value="ECO:0000250"/>
    <property type="project" value="UniProtKB"/>
</dbReference>
<dbReference type="GO" id="GO:0032740">
    <property type="term" value="P:positive regulation of interleukin-17 production"/>
    <property type="evidence" value="ECO:0000250"/>
    <property type="project" value="UniProtKB"/>
</dbReference>
<dbReference type="GO" id="GO:1901526">
    <property type="term" value="P:positive regulation of mitophagy"/>
    <property type="evidence" value="ECO:0000250"/>
    <property type="project" value="UniProtKB"/>
</dbReference>
<dbReference type="GO" id="GO:0051092">
    <property type="term" value="P:positive regulation of NF-kappaB transcription factor activity"/>
    <property type="evidence" value="ECO:0000250"/>
    <property type="project" value="UniProtKB"/>
</dbReference>
<dbReference type="GO" id="GO:0045944">
    <property type="term" value="P:positive regulation of transcription by RNA polymerase II"/>
    <property type="evidence" value="ECO:0000250"/>
    <property type="project" value="UniProtKB"/>
</dbReference>
<dbReference type="GO" id="GO:0042981">
    <property type="term" value="P:regulation of apoptotic process"/>
    <property type="evidence" value="ECO:0007669"/>
    <property type="project" value="InterPro"/>
</dbReference>
<dbReference type="GO" id="GO:0032098">
    <property type="term" value="P:regulation of appetite"/>
    <property type="evidence" value="ECO:0000250"/>
    <property type="project" value="UniProtKB"/>
</dbReference>
<dbReference type="GO" id="GO:0032495">
    <property type="term" value="P:response to muramyl dipeptide"/>
    <property type="evidence" value="ECO:0000250"/>
    <property type="project" value="UniProtKB"/>
</dbReference>
<dbReference type="GO" id="GO:0001659">
    <property type="term" value="P:temperature homeostasis"/>
    <property type="evidence" value="ECO:0000250"/>
    <property type="project" value="UniProtKB"/>
</dbReference>
<dbReference type="CDD" id="cd08788">
    <property type="entry name" value="CARD_NOD2_2_CARD15"/>
    <property type="match status" value="1"/>
</dbReference>
<dbReference type="FunFam" id="3.80.10.10:FF:000239">
    <property type="entry name" value="Nucleotide-binding oligomerization domain-containing 2"/>
    <property type="match status" value="1"/>
</dbReference>
<dbReference type="FunFam" id="1.10.533.10:FF:000032">
    <property type="entry name" value="Nucleotide-binding oligomerization domain-containing protein 2"/>
    <property type="match status" value="1"/>
</dbReference>
<dbReference type="FunFam" id="1.10.533.10:FF:000045">
    <property type="entry name" value="Nucleotide-binding oligomerization domain-containing protein 2"/>
    <property type="match status" value="1"/>
</dbReference>
<dbReference type="FunFam" id="3.40.50.300:FF:000940">
    <property type="entry name" value="Nucleotide-binding oligomerization domain-containing protein 2"/>
    <property type="match status" value="1"/>
</dbReference>
<dbReference type="Gene3D" id="1.10.533.10">
    <property type="entry name" value="Death Domain, Fas"/>
    <property type="match status" value="2"/>
</dbReference>
<dbReference type="Gene3D" id="3.40.50.300">
    <property type="entry name" value="P-loop containing nucleotide triphosphate hydrolases"/>
    <property type="match status" value="1"/>
</dbReference>
<dbReference type="Gene3D" id="3.80.10.10">
    <property type="entry name" value="Ribonuclease Inhibitor"/>
    <property type="match status" value="1"/>
</dbReference>
<dbReference type="InterPro" id="IPR001315">
    <property type="entry name" value="CARD"/>
</dbReference>
<dbReference type="InterPro" id="IPR011029">
    <property type="entry name" value="DEATH-like_dom_sf"/>
</dbReference>
<dbReference type="InterPro" id="IPR001611">
    <property type="entry name" value="Leu-rich_rpt"/>
</dbReference>
<dbReference type="InterPro" id="IPR032675">
    <property type="entry name" value="LRR_dom_sf"/>
</dbReference>
<dbReference type="InterPro" id="IPR007111">
    <property type="entry name" value="NACHT_NTPase"/>
</dbReference>
<dbReference type="InterPro" id="IPR051261">
    <property type="entry name" value="NLR"/>
</dbReference>
<dbReference type="InterPro" id="IPR041267">
    <property type="entry name" value="NLRP_HD2"/>
</dbReference>
<dbReference type="InterPro" id="IPR041075">
    <property type="entry name" value="NOD1/2_WH"/>
</dbReference>
<dbReference type="InterPro" id="IPR027417">
    <property type="entry name" value="P-loop_NTPase"/>
</dbReference>
<dbReference type="PANTHER" id="PTHR24106">
    <property type="entry name" value="NACHT, LRR AND CARD DOMAINS-CONTAINING"/>
    <property type="match status" value="1"/>
</dbReference>
<dbReference type="Pfam" id="PF00619">
    <property type="entry name" value="CARD"/>
    <property type="match status" value="1"/>
</dbReference>
<dbReference type="Pfam" id="PF13516">
    <property type="entry name" value="LRR_6"/>
    <property type="match status" value="5"/>
</dbReference>
<dbReference type="Pfam" id="PF05729">
    <property type="entry name" value="NACHT"/>
    <property type="match status" value="1"/>
</dbReference>
<dbReference type="Pfam" id="PF17776">
    <property type="entry name" value="NLRC4_HD2"/>
    <property type="match status" value="1"/>
</dbReference>
<dbReference type="Pfam" id="PF17779">
    <property type="entry name" value="NOD2_WH"/>
    <property type="match status" value="1"/>
</dbReference>
<dbReference type="SMART" id="SM00368">
    <property type="entry name" value="LRR_RI"/>
    <property type="match status" value="7"/>
</dbReference>
<dbReference type="SUPFAM" id="SSF47986">
    <property type="entry name" value="DEATH domain"/>
    <property type="match status" value="2"/>
</dbReference>
<dbReference type="SUPFAM" id="SSF52540">
    <property type="entry name" value="P-loop containing nucleoside triphosphate hydrolases"/>
    <property type="match status" value="1"/>
</dbReference>
<dbReference type="SUPFAM" id="SSF52047">
    <property type="entry name" value="RNI-like"/>
    <property type="match status" value="1"/>
</dbReference>
<dbReference type="PROSITE" id="PS50209">
    <property type="entry name" value="CARD"/>
    <property type="match status" value="2"/>
</dbReference>
<dbReference type="PROSITE" id="PS51450">
    <property type="entry name" value="LRR"/>
    <property type="match status" value="4"/>
</dbReference>
<dbReference type="PROSITE" id="PS50837">
    <property type="entry name" value="NACHT"/>
    <property type="match status" value="1"/>
</dbReference>
<proteinExistence type="inferred from homology"/>